<organism>
    <name type="scientific">Oryza sativa subsp. japonica</name>
    <name type="common">Rice</name>
    <dbReference type="NCBI Taxonomy" id="39947"/>
    <lineage>
        <taxon>Eukaryota</taxon>
        <taxon>Viridiplantae</taxon>
        <taxon>Streptophyta</taxon>
        <taxon>Embryophyta</taxon>
        <taxon>Tracheophyta</taxon>
        <taxon>Spermatophyta</taxon>
        <taxon>Magnoliopsida</taxon>
        <taxon>Liliopsida</taxon>
        <taxon>Poales</taxon>
        <taxon>Poaceae</taxon>
        <taxon>BOP clade</taxon>
        <taxon>Oryzoideae</taxon>
        <taxon>Oryzeae</taxon>
        <taxon>Oryzinae</taxon>
        <taxon>Oryza</taxon>
        <taxon>Oryza sativa</taxon>
    </lineage>
</organism>
<reference key="1">
    <citation type="journal article" date="2005" name="Nature">
        <title>The map-based sequence of the rice genome.</title>
        <authorList>
            <consortium name="International rice genome sequencing project (IRGSP)"/>
        </authorList>
    </citation>
    <scope>NUCLEOTIDE SEQUENCE [LARGE SCALE GENOMIC DNA]</scope>
    <source>
        <strain>cv. Nipponbare</strain>
    </source>
</reference>
<reference key="2">
    <citation type="journal article" date="2013" name="Rice">
        <title>Improvement of the Oryza sativa Nipponbare reference genome using next generation sequence and optical map data.</title>
        <authorList>
            <person name="Kawahara Y."/>
            <person name="de la Bastide M."/>
            <person name="Hamilton J.P."/>
            <person name="Kanamori H."/>
            <person name="McCombie W.R."/>
            <person name="Ouyang S."/>
            <person name="Schwartz D.C."/>
            <person name="Tanaka T."/>
            <person name="Wu J."/>
            <person name="Zhou S."/>
            <person name="Childs K.L."/>
            <person name="Davidson R.M."/>
            <person name="Lin H."/>
            <person name="Quesada-Ocampo L."/>
            <person name="Vaillancourt B."/>
            <person name="Sakai H."/>
            <person name="Lee S.S."/>
            <person name="Kim J."/>
            <person name="Numa H."/>
            <person name="Itoh T."/>
            <person name="Buell C.R."/>
            <person name="Matsumoto T."/>
        </authorList>
    </citation>
    <scope>GENOME REANNOTATION</scope>
    <source>
        <strain>cv. Nipponbare</strain>
    </source>
</reference>
<reference key="3">
    <citation type="journal article" date="2005" name="PLoS Biol.">
        <title>The genomes of Oryza sativa: a history of duplications.</title>
        <authorList>
            <person name="Yu J."/>
            <person name="Wang J."/>
            <person name="Lin W."/>
            <person name="Li S."/>
            <person name="Li H."/>
            <person name="Zhou J."/>
            <person name="Ni P."/>
            <person name="Dong W."/>
            <person name="Hu S."/>
            <person name="Zeng C."/>
            <person name="Zhang J."/>
            <person name="Zhang Y."/>
            <person name="Li R."/>
            <person name="Xu Z."/>
            <person name="Li S."/>
            <person name="Li X."/>
            <person name="Zheng H."/>
            <person name="Cong L."/>
            <person name="Lin L."/>
            <person name="Yin J."/>
            <person name="Geng J."/>
            <person name="Li G."/>
            <person name="Shi J."/>
            <person name="Liu J."/>
            <person name="Lv H."/>
            <person name="Li J."/>
            <person name="Wang J."/>
            <person name="Deng Y."/>
            <person name="Ran L."/>
            <person name="Shi X."/>
            <person name="Wang X."/>
            <person name="Wu Q."/>
            <person name="Li C."/>
            <person name="Ren X."/>
            <person name="Wang J."/>
            <person name="Wang X."/>
            <person name="Li D."/>
            <person name="Liu D."/>
            <person name="Zhang X."/>
            <person name="Ji Z."/>
            <person name="Zhao W."/>
            <person name="Sun Y."/>
            <person name="Zhang Z."/>
            <person name="Bao J."/>
            <person name="Han Y."/>
            <person name="Dong L."/>
            <person name="Ji J."/>
            <person name="Chen P."/>
            <person name="Wu S."/>
            <person name="Liu J."/>
            <person name="Xiao Y."/>
            <person name="Bu D."/>
            <person name="Tan J."/>
            <person name="Yang L."/>
            <person name="Ye C."/>
            <person name="Zhang J."/>
            <person name="Xu J."/>
            <person name="Zhou Y."/>
            <person name="Yu Y."/>
            <person name="Zhang B."/>
            <person name="Zhuang S."/>
            <person name="Wei H."/>
            <person name="Liu B."/>
            <person name="Lei M."/>
            <person name="Yu H."/>
            <person name="Li Y."/>
            <person name="Xu H."/>
            <person name="Wei S."/>
            <person name="He X."/>
            <person name="Fang L."/>
            <person name="Zhang Z."/>
            <person name="Zhang Y."/>
            <person name="Huang X."/>
            <person name="Su Z."/>
            <person name="Tong W."/>
            <person name="Li J."/>
            <person name="Tong Z."/>
            <person name="Li S."/>
            <person name="Ye J."/>
            <person name="Wang L."/>
            <person name="Fang L."/>
            <person name="Lei T."/>
            <person name="Chen C.-S."/>
            <person name="Chen H.-C."/>
            <person name="Xu Z."/>
            <person name="Li H."/>
            <person name="Huang H."/>
            <person name="Zhang F."/>
            <person name="Xu H."/>
            <person name="Li N."/>
            <person name="Zhao C."/>
            <person name="Li S."/>
            <person name="Dong L."/>
            <person name="Huang Y."/>
            <person name="Li L."/>
            <person name="Xi Y."/>
            <person name="Qi Q."/>
            <person name="Li W."/>
            <person name="Zhang B."/>
            <person name="Hu W."/>
            <person name="Zhang Y."/>
            <person name="Tian X."/>
            <person name="Jiao Y."/>
            <person name="Liang X."/>
            <person name="Jin J."/>
            <person name="Gao L."/>
            <person name="Zheng W."/>
            <person name="Hao B."/>
            <person name="Liu S.-M."/>
            <person name="Wang W."/>
            <person name="Yuan L."/>
            <person name="Cao M."/>
            <person name="McDermott J."/>
            <person name="Samudrala R."/>
            <person name="Wang J."/>
            <person name="Wong G.K.-S."/>
            <person name="Yang H."/>
        </authorList>
    </citation>
    <scope>NUCLEOTIDE SEQUENCE [LARGE SCALE GENOMIC DNA]</scope>
    <source>
        <strain>cv. Nipponbare</strain>
    </source>
</reference>
<dbReference type="EC" id="1.10.3.2"/>
<dbReference type="EMBL" id="AP004774">
    <property type="protein sequence ID" value="BAD15631.1"/>
    <property type="molecule type" value="Genomic_DNA"/>
</dbReference>
<dbReference type="EMBL" id="AP014958">
    <property type="protein sequence ID" value="BAS80935.1"/>
    <property type="molecule type" value="Genomic_DNA"/>
</dbReference>
<dbReference type="EMBL" id="CM000139">
    <property type="protein sequence ID" value="EAZ24626.1"/>
    <property type="molecule type" value="Genomic_DNA"/>
</dbReference>
<dbReference type="SMR" id="Q6Z8L2"/>
<dbReference type="STRING" id="39947.Q6Z8L2"/>
<dbReference type="GlyCosmos" id="Q6Z8L2">
    <property type="glycosylation" value="7 sites, No reported glycans"/>
</dbReference>
<dbReference type="PaxDb" id="39947-Q6Z8L2"/>
<dbReference type="EnsemblPlants" id="Os02t0749700-01">
    <property type="protein sequence ID" value="Os02t0749700-01"/>
    <property type="gene ID" value="Os02g0749700"/>
</dbReference>
<dbReference type="GeneID" id="107276196"/>
<dbReference type="Gramene" id="Os02t0749700-01">
    <property type="protein sequence ID" value="Os02t0749700-01"/>
    <property type="gene ID" value="Os02g0749700"/>
</dbReference>
<dbReference type="KEGG" id="osa:107276196"/>
<dbReference type="eggNOG" id="KOG1263">
    <property type="taxonomic scope" value="Eukaryota"/>
</dbReference>
<dbReference type="HOGENOM" id="CLU_006504_6_3_1"/>
<dbReference type="InParanoid" id="Q6Z8L2"/>
<dbReference type="OMA" id="INVLPCD"/>
<dbReference type="OrthoDB" id="2121828at2759"/>
<dbReference type="Proteomes" id="UP000000763">
    <property type="component" value="Chromosome 2"/>
</dbReference>
<dbReference type="Proteomes" id="UP000007752">
    <property type="component" value="Chromosome 2"/>
</dbReference>
<dbReference type="Proteomes" id="UP000059680">
    <property type="component" value="Chromosome 2"/>
</dbReference>
<dbReference type="GO" id="GO:0048046">
    <property type="term" value="C:apoplast"/>
    <property type="evidence" value="ECO:0007669"/>
    <property type="project" value="UniProtKB-SubCell"/>
</dbReference>
<dbReference type="GO" id="GO:0005507">
    <property type="term" value="F:copper ion binding"/>
    <property type="evidence" value="ECO:0007669"/>
    <property type="project" value="InterPro"/>
</dbReference>
<dbReference type="GO" id="GO:0052716">
    <property type="term" value="F:hydroquinone:oxygen oxidoreductase activity"/>
    <property type="evidence" value="ECO:0007669"/>
    <property type="project" value="UniProtKB-EC"/>
</dbReference>
<dbReference type="GO" id="GO:0016491">
    <property type="term" value="F:oxidoreductase activity"/>
    <property type="evidence" value="ECO:0000318"/>
    <property type="project" value="GO_Central"/>
</dbReference>
<dbReference type="GO" id="GO:0046274">
    <property type="term" value="P:lignin catabolic process"/>
    <property type="evidence" value="ECO:0007669"/>
    <property type="project" value="UniProtKB-KW"/>
</dbReference>
<dbReference type="CDD" id="cd13849">
    <property type="entry name" value="CuRO_1_LCC_plant"/>
    <property type="match status" value="1"/>
</dbReference>
<dbReference type="CDD" id="cd13875">
    <property type="entry name" value="CuRO_2_LCC_plant"/>
    <property type="match status" value="1"/>
</dbReference>
<dbReference type="CDD" id="cd13897">
    <property type="entry name" value="CuRO_3_LCC_plant"/>
    <property type="match status" value="1"/>
</dbReference>
<dbReference type="Gene3D" id="2.60.40.420">
    <property type="entry name" value="Cupredoxins - blue copper proteins"/>
    <property type="match status" value="3"/>
</dbReference>
<dbReference type="InterPro" id="IPR011707">
    <property type="entry name" value="Cu-oxidase-like_N"/>
</dbReference>
<dbReference type="InterPro" id="IPR001117">
    <property type="entry name" value="Cu-oxidase_2nd"/>
</dbReference>
<dbReference type="InterPro" id="IPR011706">
    <property type="entry name" value="Cu-oxidase_C"/>
</dbReference>
<dbReference type="InterPro" id="IPR045087">
    <property type="entry name" value="Cu-oxidase_fam"/>
</dbReference>
<dbReference type="InterPro" id="IPR033138">
    <property type="entry name" value="Cu_oxidase_CS"/>
</dbReference>
<dbReference type="InterPro" id="IPR002355">
    <property type="entry name" value="Cu_oxidase_Cu_BS"/>
</dbReference>
<dbReference type="InterPro" id="IPR008972">
    <property type="entry name" value="Cupredoxin"/>
</dbReference>
<dbReference type="InterPro" id="IPR034288">
    <property type="entry name" value="CuRO_1_LCC"/>
</dbReference>
<dbReference type="InterPro" id="IPR034285">
    <property type="entry name" value="CuRO_2_LCC"/>
</dbReference>
<dbReference type="InterPro" id="IPR034289">
    <property type="entry name" value="CuRO_3_LCC"/>
</dbReference>
<dbReference type="InterPro" id="IPR017761">
    <property type="entry name" value="Laccase"/>
</dbReference>
<dbReference type="NCBIfam" id="TIGR03389">
    <property type="entry name" value="laccase"/>
    <property type="match status" value="1"/>
</dbReference>
<dbReference type="PANTHER" id="PTHR11709:SF262">
    <property type="entry name" value="LACCASE-14"/>
    <property type="match status" value="1"/>
</dbReference>
<dbReference type="PANTHER" id="PTHR11709">
    <property type="entry name" value="MULTI-COPPER OXIDASE"/>
    <property type="match status" value="1"/>
</dbReference>
<dbReference type="Pfam" id="PF00394">
    <property type="entry name" value="Cu-oxidase"/>
    <property type="match status" value="1"/>
</dbReference>
<dbReference type="Pfam" id="PF07731">
    <property type="entry name" value="Cu-oxidase_2"/>
    <property type="match status" value="1"/>
</dbReference>
<dbReference type="Pfam" id="PF07732">
    <property type="entry name" value="Cu-oxidase_3"/>
    <property type="match status" value="1"/>
</dbReference>
<dbReference type="SUPFAM" id="SSF49503">
    <property type="entry name" value="Cupredoxins"/>
    <property type="match status" value="3"/>
</dbReference>
<dbReference type="PROSITE" id="PS00079">
    <property type="entry name" value="MULTICOPPER_OXIDASE1"/>
    <property type="match status" value="1"/>
</dbReference>
<dbReference type="PROSITE" id="PS00080">
    <property type="entry name" value="MULTICOPPER_OXIDASE2"/>
    <property type="match status" value="1"/>
</dbReference>
<gene>
    <name type="primary">LAC9</name>
    <name type="ordered locus">Os02g0749700</name>
    <name type="ordered locus">LOC_Os02g51440</name>
    <name type="ORF">OsJ_008109</name>
    <name type="ORF">P0431B06.7</name>
</gene>
<name>LAC9_ORYSJ</name>
<evidence type="ECO:0000250" key="1"/>
<evidence type="ECO:0000255" key="2"/>
<evidence type="ECO:0000305" key="3"/>
<keyword id="KW-0052">Apoplast</keyword>
<keyword id="KW-0186">Copper</keyword>
<keyword id="KW-0325">Glycoprotein</keyword>
<keyword id="KW-0439">Lignin degradation</keyword>
<keyword id="KW-0479">Metal-binding</keyword>
<keyword id="KW-0560">Oxidoreductase</keyword>
<keyword id="KW-1185">Reference proteome</keyword>
<keyword id="KW-0677">Repeat</keyword>
<keyword id="KW-0964">Secreted</keyword>
<keyword id="KW-0732">Signal</keyword>
<proteinExistence type="inferred from homology"/>
<sequence length="579" mass="64371">MGTAKLPALLWLLAGVVLALAVNPAHGAKTRHYDFFITETNYTRLCHEKSILTVNGQFPGPTIYARKGDLVIVNVHNNGNKNITIHWHGVDQPRNPWSDGPEFITQCPIRPGGNFTYQVILSEEEGTLWWHAHSDFDRATVHGAIVIHPKRGTTFPFKKPDKEIPVILGEWWNDDIEHVLDKAQLLGGDVDPSNANTINAQPGDMFPCSRDDTFKVAVQQGNTYLLRIINAGLTNDMFFAIAGHRLTVVGIDARYTKPLTVDYIMIAPGQTMDVLLEAKRTLGSNSRYYMAARTFITLPLDTIPFNNSTATAIVEYTDSVTARPVGPPEFPVQLPAIKDENAAMAFVTQLRSLGNQEHPVHVPTHVDEHMLIDIDINVLPCDPTNMAEKCKEGPQGNRFAASLNNVSFQSPAIDVLDAYYYSSGHGVYEEDFPNKPTAFVDPPVNNGSGPLMTKRGTKVKVLEYGTVVEVVFHDLSSENHPMHLHGFAFYVVGRGNGTFDESRDPATYNLVDPPFQNTVSVPRSGWAAIRFRADNPGVWFMHCHFDRHVVWGMDTVFIVKDGKTPQAQMLPRPPNMPQC</sequence>
<comment type="function">
    <text evidence="1">Lignin degradation and detoxification of lignin-derived products.</text>
</comment>
<comment type="catalytic activity">
    <reaction>
        <text>4 hydroquinone + O2 = 4 benzosemiquinone + 2 H2O</text>
        <dbReference type="Rhea" id="RHEA:11276"/>
        <dbReference type="ChEBI" id="CHEBI:15377"/>
        <dbReference type="ChEBI" id="CHEBI:15379"/>
        <dbReference type="ChEBI" id="CHEBI:17594"/>
        <dbReference type="ChEBI" id="CHEBI:17977"/>
        <dbReference type="EC" id="1.10.3.2"/>
    </reaction>
</comment>
<comment type="cofactor">
    <cofactor evidence="1">
        <name>Cu cation</name>
        <dbReference type="ChEBI" id="CHEBI:23378"/>
    </cofactor>
    <text evidence="1">Binds 4 Cu cations per monomer.</text>
</comment>
<comment type="subcellular location">
    <subcellularLocation>
        <location evidence="3">Secreted</location>
        <location evidence="3">Extracellular space</location>
        <location evidence="3">Apoplast</location>
    </subcellularLocation>
</comment>
<comment type="similarity">
    <text evidence="3">Belongs to the multicopper oxidase family.</text>
</comment>
<protein>
    <recommendedName>
        <fullName>Putative laccase-9</fullName>
        <ecNumber>1.10.3.2</ecNumber>
    </recommendedName>
    <alternativeName>
        <fullName>Benzenediol:oxygen oxidoreductase 9</fullName>
    </alternativeName>
    <alternativeName>
        <fullName>Diphenol oxidase 9</fullName>
    </alternativeName>
    <alternativeName>
        <fullName>Urishiol oxidase 9</fullName>
    </alternativeName>
</protein>
<accession>Q6Z8L2</accession>
<accession>A0A0P0VPT8</accession>
<feature type="signal peptide" evidence="2">
    <location>
        <begin position="1"/>
        <end position="27"/>
    </location>
</feature>
<feature type="chain" id="PRO_0000291894" description="Putative laccase-9">
    <location>
        <begin position="28"/>
        <end position="579"/>
    </location>
</feature>
<feature type="domain" description="Plastocyanin-like 1">
    <location>
        <begin position="36"/>
        <end position="152"/>
    </location>
</feature>
<feature type="domain" description="Plastocyanin-like 2">
    <location>
        <begin position="162"/>
        <end position="319"/>
    </location>
</feature>
<feature type="domain" description="Plastocyanin-like 3">
    <location>
        <begin position="436"/>
        <end position="563"/>
    </location>
</feature>
<feature type="binding site" evidence="1">
    <location>
        <position position="86"/>
    </location>
    <ligand>
        <name>Cu cation</name>
        <dbReference type="ChEBI" id="CHEBI:23378"/>
        <label>1</label>
    </ligand>
</feature>
<feature type="binding site" evidence="1">
    <location>
        <position position="88"/>
    </location>
    <ligand>
        <name>Cu cation</name>
        <dbReference type="ChEBI" id="CHEBI:23378"/>
        <label>2</label>
    </ligand>
</feature>
<feature type="binding site" evidence="1">
    <location>
        <position position="131"/>
    </location>
    <ligand>
        <name>Cu cation</name>
        <dbReference type="ChEBI" id="CHEBI:23378"/>
        <label>2</label>
    </ligand>
</feature>
<feature type="binding site" evidence="1">
    <location>
        <position position="133"/>
    </location>
    <ligand>
        <name>Cu cation</name>
        <dbReference type="ChEBI" id="CHEBI:23378"/>
        <label>3</label>
    </ligand>
</feature>
<feature type="binding site" evidence="1">
    <location>
        <position position="480"/>
    </location>
    <ligand>
        <name>Cu cation</name>
        <dbReference type="ChEBI" id="CHEBI:23378"/>
        <label>4</label>
    </ligand>
</feature>
<feature type="binding site" evidence="1">
    <location>
        <position position="483"/>
    </location>
    <ligand>
        <name>Cu cation</name>
        <dbReference type="ChEBI" id="CHEBI:23378"/>
        <label>1</label>
    </ligand>
</feature>
<feature type="binding site" evidence="1">
    <location>
        <position position="485"/>
    </location>
    <ligand>
        <name>Cu cation</name>
        <dbReference type="ChEBI" id="CHEBI:23378"/>
        <label>3</label>
    </ligand>
</feature>
<feature type="binding site" evidence="1">
    <location>
        <position position="542"/>
    </location>
    <ligand>
        <name>Cu cation</name>
        <dbReference type="ChEBI" id="CHEBI:23378"/>
        <label>3</label>
    </ligand>
</feature>
<feature type="binding site" evidence="1">
    <location>
        <position position="543"/>
    </location>
    <ligand>
        <name>Cu cation</name>
        <dbReference type="ChEBI" id="CHEBI:23378"/>
        <label>4</label>
    </ligand>
</feature>
<feature type="binding site" evidence="1">
    <location>
        <position position="544"/>
    </location>
    <ligand>
        <name>Cu cation</name>
        <dbReference type="ChEBI" id="CHEBI:23378"/>
        <label>2</label>
    </ligand>
</feature>
<feature type="binding site" evidence="1">
    <location>
        <position position="548"/>
    </location>
    <ligand>
        <name>Cu cation</name>
        <dbReference type="ChEBI" id="CHEBI:23378"/>
        <label>4</label>
    </ligand>
</feature>
<feature type="binding site" evidence="1">
    <location>
        <position position="553"/>
    </location>
    <ligand>
        <name>Cu cation</name>
        <dbReference type="ChEBI" id="CHEBI:23378"/>
        <label>4</label>
    </ligand>
</feature>
<feature type="glycosylation site" description="N-linked (GlcNAc...) asparagine" evidence="2">
    <location>
        <position position="41"/>
    </location>
</feature>
<feature type="glycosylation site" description="N-linked (GlcNAc...) asparagine" evidence="2">
    <location>
        <position position="82"/>
    </location>
</feature>
<feature type="glycosylation site" description="N-linked (GlcNAc...) asparagine" evidence="2">
    <location>
        <position position="114"/>
    </location>
</feature>
<feature type="glycosylation site" description="N-linked (GlcNAc...) asparagine" evidence="2">
    <location>
        <position position="307"/>
    </location>
</feature>
<feature type="glycosylation site" description="N-linked (GlcNAc...) asparagine" evidence="2">
    <location>
        <position position="405"/>
    </location>
</feature>
<feature type="glycosylation site" description="N-linked (GlcNAc...) asparagine" evidence="2">
    <location>
        <position position="446"/>
    </location>
</feature>
<feature type="glycosylation site" description="N-linked (GlcNAc...) asparagine" evidence="2">
    <location>
        <position position="496"/>
    </location>
</feature>